<proteinExistence type="inferred from homology"/>
<name>ISPG_MARSD</name>
<evidence type="ECO:0000255" key="1">
    <source>
        <dbReference type="HAMAP-Rule" id="MF_00159"/>
    </source>
</evidence>
<sequence>MINRKKTRELFIGDVGIGGDNPIRVQSMCNTDTRDALSTRAQIDALAEAGCEIVRVAVPDEEAAKALPQIRKGSPVPLVADIHFDYRLALSAMEAGIDALRINPGNIGGEDKVDSVVSAAKERNVPIRIGVNGGSLDKALLAKYGGPTPQAMVESALEHVALLEKRNFYNTKISLKSSSVLNTIAAYKLLAEKVDYPQHVGITEAGTLVRGAVKSSVGLGILFWEGLGDTMRVSLTHDPVAEVGVAWEILRSLGLRERGPEIVSCPTCGRTEIELIDLAQKVEDNLRGVEDVFTVAVMGCVVNGPGEAREADIGIAGGRGLGIIFRKGEVIRKVKGDENLLPEFMKEIELFLKEKRGQ</sequence>
<gene>
    <name evidence="1" type="primary">ispG</name>
    <name type="ordered locus">Desal_0734</name>
</gene>
<organism>
    <name type="scientific">Maridesulfovibrio salexigens (strain ATCC 14822 / DSM 2638 / NCIMB 8403 / VKM B-1763)</name>
    <name type="common">Desulfovibrio salexigens</name>
    <dbReference type="NCBI Taxonomy" id="526222"/>
    <lineage>
        <taxon>Bacteria</taxon>
        <taxon>Pseudomonadati</taxon>
        <taxon>Thermodesulfobacteriota</taxon>
        <taxon>Desulfovibrionia</taxon>
        <taxon>Desulfovibrionales</taxon>
        <taxon>Desulfovibrionaceae</taxon>
        <taxon>Maridesulfovibrio</taxon>
    </lineage>
</organism>
<reference key="1">
    <citation type="submission" date="2009-06" db="EMBL/GenBank/DDBJ databases">
        <title>Complete sequence of Desulfovibrio salexigens DSM 2638.</title>
        <authorList>
            <consortium name="US DOE Joint Genome Institute"/>
            <person name="Lucas S."/>
            <person name="Copeland A."/>
            <person name="Lapidus A."/>
            <person name="Glavina del Rio T."/>
            <person name="Tice H."/>
            <person name="Bruce D."/>
            <person name="Goodwin L."/>
            <person name="Pitluck S."/>
            <person name="Munk A.C."/>
            <person name="Brettin T."/>
            <person name="Detter J.C."/>
            <person name="Han C."/>
            <person name="Tapia R."/>
            <person name="Larimer F."/>
            <person name="Land M."/>
            <person name="Hauser L."/>
            <person name="Kyrpides N."/>
            <person name="Anderson I."/>
            <person name="Wall J.D."/>
            <person name="Arkin A.P."/>
            <person name="Dehal P."/>
            <person name="Chivian D."/>
            <person name="Giles B."/>
            <person name="Hazen T.C."/>
        </authorList>
    </citation>
    <scope>NUCLEOTIDE SEQUENCE [LARGE SCALE GENOMIC DNA]</scope>
    <source>
        <strain>ATCC 14822 / DSM 2638 / NCIMB 8403 / VKM B-1763</strain>
    </source>
</reference>
<dbReference type="EC" id="1.17.7.3" evidence="1"/>
<dbReference type="EMBL" id="CP001649">
    <property type="protein sequence ID" value="ACS78800.1"/>
    <property type="molecule type" value="Genomic_DNA"/>
</dbReference>
<dbReference type="RefSeq" id="WP_015850619.1">
    <property type="nucleotide sequence ID" value="NC_012881.1"/>
</dbReference>
<dbReference type="SMR" id="C6BYK9"/>
<dbReference type="STRING" id="526222.Desal_0734"/>
<dbReference type="KEGG" id="dsa:Desal_0734"/>
<dbReference type="eggNOG" id="COG0821">
    <property type="taxonomic scope" value="Bacteria"/>
</dbReference>
<dbReference type="HOGENOM" id="CLU_042258_0_0_7"/>
<dbReference type="OrthoDB" id="9803214at2"/>
<dbReference type="UniPathway" id="UPA00056">
    <property type="reaction ID" value="UER00096"/>
</dbReference>
<dbReference type="Proteomes" id="UP000002601">
    <property type="component" value="Chromosome"/>
</dbReference>
<dbReference type="GO" id="GO:0051539">
    <property type="term" value="F:4 iron, 4 sulfur cluster binding"/>
    <property type="evidence" value="ECO:0007669"/>
    <property type="project" value="UniProtKB-UniRule"/>
</dbReference>
<dbReference type="GO" id="GO:0046429">
    <property type="term" value="F:4-hydroxy-3-methylbut-2-en-1-yl diphosphate synthase activity (ferredoxin)"/>
    <property type="evidence" value="ECO:0007669"/>
    <property type="project" value="UniProtKB-UniRule"/>
</dbReference>
<dbReference type="GO" id="GO:0141197">
    <property type="term" value="F:4-hydroxy-3-methylbut-2-enyl-diphosphate synthase activity (flavodoxin)"/>
    <property type="evidence" value="ECO:0007669"/>
    <property type="project" value="UniProtKB-EC"/>
</dbReference>
<dbReference type="GO" id="GO:0005506">
    <property type="term" value="F:iron ion binding"/>
    <property type="evidence" value="ECO:0007669"/>
    <property type="project" value="InterPro"/>
</dbReference>
<dbReference type="GO" id="GO:0019288">
    <property type="term" value="P:isopentenyl diphosphate biosynthetic process, methylerythritol 4-phosphate pathway"/>
    <property type="evidence" value="ECO:0007669"/>
    <property type="project" value="UniProtKB-UniRule"/>
</dbReference>
<dbReference type="GO" id="GO:0016114">
    <property type="term" value="P:terpenoid biosynthetic process"/>
    <property type="evidence" value="ECO:0007669"/>
    <property type="project" value="InterPro"/>
</dbReference>
<dbReference type="FunFam" id="3.20.20.20:FF:000001">
    <property type="entry name" value="4-hydroxy-3-methylbut-2-en-1-yl diphosphate synthase (flavodoxin)"/>
    <property type="match status" value="1"/>
</dbReference>
<dbReference type="Gene3D" id="3.20.20.20">
    <property type="entry name" value="Dihydropteroate synthase-like"/>
    <property type="match status" value="1"/>
</dbReference>
<dbReference type="Gene3D" id="3.30.413.10">
    <property type="entry name" value="Sulfite Reductase Hemoprotein, domain 1"/>
    <property type="match status" value="1"/>
</dbReference>
<dbReference type="HAMAP" id="MF_00159">
    <property type="entry name" value="IspG"/>
    <property type="match status" value="1"/>
</dbReference>
<dbReference type="InterPro" id="IPR011005">
    <property type="entry name" value="Dihydropteroate_synth-like_sf"/>
</dbReference>
<dbReference type="InterPro" id="IPR016425">
    <property type="entry name" value="IspG_bac"/>
</dbReference>
<dbReference type="InterPro" id="IPR004588">
    <property type="entry name" value="IspG_bac-typ"/>
</dbReference>
<dbReference type="InterPro" id="IPR045854">
    <property type="entry name" value="NO2/SO3_Rdtase_4Fe4S_sf"/>
</dbReference>
<dbReference type="NCBIfam" id="TIGR00612">
    <property type="entry name" value="ispG_gcpE"/>
    <property type="match status" value="1"/>
</dbReference>
<dbReference type="NCBIfam" id="NF001540">
    <property type="entry name" value="PRK00366.1"/>
    <property type="match status" value="1"/>
</dbReference>
<dbReference type="PANTHER" id="PTHR30454">
    <property type="entry name" value="4-HYDROXY-3-METHYLBUT-2-EN-1-YL DIPHOSPHATE SYNTHASE"/>
    <property type="match status" value="1"/>
</dbReference>
<dbReference type="PANTHER" id="PTHR30454:SF0">
    <property type="entry name" value="4-HYDROXY-3-METHYLBUT-2-EN-1-YL DIPHOSPHATE SYNTHASE (FERREDOXIN), CHLOROPLASTIC"/>
    <property type="match status" value="1"/>
</dbReference>
<dbReference type="Pfam" id="PF04551">
    <property type="entry name" value="GcpE"/>
    <property type="match status" value="1"/>
</dbReference>
<dbReference type="PIRSF" id="PIRSF004640">
    <property type="entry name" value="IspG"/>
    <property type="match status" value="1"/>
</dbReference>
<dbReference type="SUPFAM" id="SSF51412">
    <property type="entry name" value="Inosine monophosphate dehydrogenase (IMPDH)"/>
    <property type="match status" value="1"/>
</dbReference>
<dbReference type="SUPFAM" id="SSF56014">
    <property type="entry name" value="Nitrite and sulphite reductase 4Fe-4S domain-like"/>
    <property type="match status" value="1"/>
</dbReference>
<comment type="function">
    <text evidence="1">Converts 2C-methyl-D-erythritol 2,4-cyclodiphosphate (ME-2,4cPP) into 1-hydroxy-2-methyl-2-(E)-butenyl 4-diphosphate.</text>
</comment>
<comment type="catalytic activity">
    <reaction evidence="1">
        <text>(2E)-4-hydroxy-3-methylbut-2-enyl diphosphate + oxidized [flavodoxin] + H2O + 2 H(+) = 2-C-methyl-D-erythritol 2,4-cyclic diphosphate + reduced [flavodoxin]</text>
        <dbReference type="Rhea" id="RHEA:43604"/>
        <dbReference type="Rhea" id="RHEA-COMP:10622"/>
        <dbReference type="Rhea" id="RHEA-COMP:10623"/>
        <dbReference type="ChEBI" id="CHEBI:15377"/>
        <dbReference type="ChEBI" id="CHEBI:15378"/>
        <dbReference type="ChEBI" id="CHEBI:57618"/>
        <dbReference type="ChEBI" id="CHEBI:58210"/>
        <dbReference type="ChEBI" id="CHEBI:58483"/>
        <dbReference type="ChEBI" id="CHEBI:128753"/>
        <dbReference type="EC" id="1.17.7.3"/>
    </reaction>
</comment>
<comment type="cofactor">
    <cofactor evidence="1">
        <name>[4Fe-4S] cluster</name>
        <dbReference type="ChEBI" id="CHEBI:49883"/>
    </cofactor>
    <text evidence="1">Binds 1 [4Fe-4S] cluster.</text>
</comment>
<comment type="pathway">
    <text evidence="1">Isoprenoid biosynthesis; isopentenyl diphosphate biosynthesis via DXP pathway; isopentenyl diphosphate from 1-deoxy-D-xylulose 5-phosphate: step 5/6.</text>
</comment>
<comment type="similarity">
    <text evidence="1">Belongs to the IspG family.</text>
</comment>
<keyword id="KW-0004">4Fe-4S</keyword>
<keyword id="KW-0408">Iron</keyword>
<keyword id="KW-0411">Iron-sulfur</keyword>
<keyword id="KW-0414">Isoprene biosynthesis</keyword>
<keyword id="KW-0479">Metal-binding</keyword>
<keyword id="KW-0560">Oxidoreductase</keyword>
<keyword id="KW-1185">Reference proteome</keyword>
<feature type="chain" id="PRO_1000203501" description="4-hydroxy-3-methylbut-2-en-1-yl diphosphate synthase (flavodoxin)">
    <location>
        <begin position="1"/>
        <end position="358"/>
    </location>
</feature>
<feature type="binding site" evidence="1">
    <location>
        <position position="265"/>
    </location>
    <ligand>
        <name>[4Fe-4S] cluster</name>
        <dbReference type="ChEBI" id="CHEBI:49883"/>
    </ligand>
</feature>
<feature type="binding site" evidence="1">
    <location>
        <position position="268"/>
    </location>
    <ligand>
        <name>[4Fe-4S] cluster</name>
        <dbReference type="ChEBI" id="CHEBI:49883"/>
    </ligand>
</feature>
<feature type="binding site" evidence="1">
    <location>
        <position position="300"/>
    </location>
    <ligand>
        <name>[4Fe-4S] cluster</name>
        <dbReference type="ChEBI" id="CHEBI:49883"/>
    </ligand>
</feature>
<feature type="binding site" evidence="1">
    <location>
        <position position="307"/>
    </location>
    <ligand>
        <name>[4Fe-4S] cluster</name>
        <dbReference type="ChEBI" id="CHEBI:49883"/>
    </ligand>
</feature>
<accession>C6BYK9</accession>
<protein>
    <recommendedName>
        <fullName evidence="1">4-hydroxy-3-methylbut-2-en-1-yl diphosphate synthase (flavodoxin)</fullName>
        <ecNumber evidence="1">1.17.7.3</ecNumber>
    </recommendedName>
    <alternativeName>
        <fullName evidence="1">1-hydroxy-2-methyl-2-(E)-butenyl 4-diphosphate synthase</fullName>
    </alternativeName>
</protein>